<gene>
    <name evidence="5" type="primary">Arp2</name>
    <name type="ORF">MAA_03240</name>
</gene>
<reference key="1">
    <citation type="journal article" date="2011" name="PLoS Genet.">
        <title>Genome sequencing and comparative transcriptomics of the model entomopathogenic fungi Metarhizium anisopliae and M. acridum.</title>
        <authorList>
            <person name="Gao Q."/>
            <person name="Jin K."/>
            <person name="Ying S.-H."/>
            <person name="Zhang Y."/>
            <person name="Xiao G."/>
            <person name="Shang Y."/>
            <person name="Duan Z."/>
            <person name="Hu X."/>
            <person name="Xie X.-Q."/>
            <person name="Zhou G."/>
            <person name="Peng G."/>
            <person name="Luo Z."/>
            <person name="Huang W."/>
            <person name="Wang B."/>
            <person name="Fang W."/>
            <person name="Wang S."/>
            <person name="Zhong Y."/>
            <person name="Ma L.-J."/>
            <person name="St Leger R.J."/>
            <person name="Zhao G.-P."/>
            <person name="Pei Y."/>
            <person name="Feng M.-G."/>
            <person name="Xia Y."/>
            <person name="Wang C."/>
        </authorList>
    </citation>
    <scope>NUCLEOTIDE SEQUENCE [LARGE SCALE GENOMIC DNA]</scope>
    <source>
        <strain>ARSEF 23 / ATCC MYA-3075</strain>
    </source>
</reference>
<reference key="2">
    <citation type="journal article" date="2014" name="Proc. Natl. Acad. Sci. U.S.A.">
        <title>Trajectory and genomic determinants of fungal-pathogen speciation and host adaptation.</title>
        <authorList>
            <person name="Hu X."/>
            <person name="Xiao G."/>
            <person name="Zheng P."/>
            <person name="Shang Y."/>
            <person name="Su Y."/>
            <person name="Zhang X."/>
            <person name="Liu X."/>
            <person name="Zhan S."/>
            <person name="St Leger R.J."/>
            <person name="Wang C."/>
        </authorList>
    </citation>
    <scope>GENOME REANNOTATION</scope>
    <source>
        <strain>ARSEF 23 / ATCC MYA-3075</strain>
    </source>
</reference>
<reference key="3">
    <citation type="journal article" date="2018" name="PLoS Genet.">
        <title>Duplication of a Pks gene cluster and subsequent functional diversification facilitate environmental adaptation in Metarhizium species.</title>
        <authorList>
            <person name="Zeng G."/>
            <person name="Zhang P."/>
            <person name="Zhang Q."/>
            <person name="Zhao H."/>
            <person name="Li Z."/>
            <person name="Zhang X."/>
            <person name="Wang C."/>
            <person name="Yin W.B."/>
            <person name="Fang W."/>
        </authorList>
    </citation>
    <scope>IDENTIFICATION</scope>
    <scope>FUNCTION</scope>
</reference>
<comment type="function">
    <text evidence="4">Hydroxynaphthalene reductase-like protein; part of the Pks2 gene cluster that mediates the formation of infectious structures (appressoria), enabling these fungi to kill insects faster (PubMed:29958281). The product of the Pks2 gene cluster is different from the one of Pks1 and has still not been identified (PubMed:29958281).</text>
</comment>
<comment type="similarity">
    <text evidence="6">Belongs to the short-chain dehydrogenases/reductases (SDR) family.</text>
</comment>
<name>ARP2_METRA</name>
<keyword id="KW-0521">NADP</keyword>
<keyword id="KW-0560">Oxidoreductase</keyword>
<dbReference type="EC" id="1.1.-.-" evidence="7"/>
<dbReference type="EMBL" id="ADNJ02000004">
    <property type="protein sequence ID" value="EFZ02011.1"/>
    <property type="molecule type" value="Genomic_DNA"/>
</dbReference>
<dbReference type="RefSeq" id="XP_007819429.1">
    <property type="nucleotide sequence ID" value="XM_007821238.1"/>
</dbReference>
<dbReference type="SMR" id="E9ET40"/>
<dbReference type="GeneID" id="19257526"/>
<dbReference type="KEGG" id="maj:MAA_03240"/>
<dbReference type="HOGENOM" id="CLU_010194_1_3_1"/>
<dbReference type="OrthoDB" id="47007at2759"/>
<dbReference type="Proteomes" id="UP000002498">
    <property type="component" value="Unassembled WGS sequence"/>
</dbReference>
<dbReference type="GO" id="GO:0016491">
    <property type="term" value="F:oxidoreductase activity"/>
    <property type="evidence" value="ECO:0007669"/>
    <property type="project" value="UniProtKB-KW"/>
</dbReference>
<dbReference type="FunFam" id="3.40.50.720:FF:000084">
    <property type="entry name" value="Short-chain dehydrogenase reductase"/>
    <property type="match status" value="1"/>
</dbReference>
<dbReference type="Gene3D" id="3.40.50.720">
    <property type="entry name" value="NAD(P)-binding Rossmann-like Domain"/>
    <property type="match status" value="1"/>
</dbReference>
<dbReference type="InterPro" id="IPR036291">
    <property type="entry name" value="NAD(P)-bd_dom_sf"/>
</dbReference>
<dbReference type="InterPro" id="IPR020904">
    <property type="entry name" value="Sc_DH/Rdtase_CS"/>
</dbReference>
<dbReference type="InterPro" id="IPR002347">
    <property type="entry name" value="SDR_fam"/>
</dbReference>
<dbReference type="PANTHER" id="PTHR43639">
    <property type="entry name" value="OXIDOREDUCTASE, SHORT-CHAIN DEHYDROGENASE/REDUCTASE FAMILY (AFU_ORTHOLOGUE AFUA_5G02870)"/>
    <property type="match status" value="1"/>
</dbReference>
<dbReference type="PANTHER" id="PTHR43639:SF1">
    <property type="entry name" value="SHORT-CHAIN DEHYDROGENASE_REDUCTASE FAMILY PROTEIN"/>
    <property type="match status" value="1"/>
</dbReference>
<dbReference type="Pfam" id="PF13561">
    <property type="entry name" value="adh_short_C2"/>
    <property type="match status" value="1"/>
</dbReference>
<dbReference type="PRINTS" id="PR00081">
    <property type="entry name" value="GDHRDH"/>
</dbReference>
<dbReference type="PRINTS" id="PR00080">
    <property type="entry name" value="SDRFAMILY"/>
</dbReference>
<dbReference type="SMART" id="SM00822">
    <property type="entry name" value="PKS_KR"/>
    <property type="match status" value="1"/>
</dbReference>
<dbReference type="SUPFAM" id="SSF51735">
    <property type="entry name" value="NAD(P)-binding Rossmann-fold domains"/>
    <property type="match status" value="1"/>
</dbReference>
<dbReference type="PROSITE" id="PS00061">
    <property type="entry name" value="ADH_SHORT"/>
    <property type="match status" value="1"/>
</dbReference>
<proteinExistence type="inferred from homology"/>
<organism>
    <name type="scientific">Metarhizium robertsii (strain ARSEF 23 / ATCC MYA-3075)</name>
    <name type="common">Metarhizium anisopliae (strain ARSEF 23)</name>
    <dbReference type="NCBI Taxonomy" id="655844"/>
    <lineage>
        <taxon>Eukaryota</taxon>
        <taxon>Fungi</taxon>
        <taxon>Dikarya</taxon>
        <taxon>Ascomycota</taxon>
        <taxon>Pezizomycotina</taxon>
        <taxon>Sordariomycetes</taxon>
        <taxon>Hypocreomycetidae</taxon>
        <taxon>Hypocreales</taxon>
        <taxon>Clavicipitaceae</taxon>
        <taxon>Metarhizium</taxon>
    </lineage>
</organism>
<accession>E9ET40</accession>
<evidence type="ECO:0000250" key="1">
    <source>
        <dbReference type="UniProtKB" id="L0E2Z4"/>
    </source>
</evidence>
<evidence type="ECO:0000250" key="2">
    <source>
        <dbReference type="UniProtKB" id="O93868"/>
    </source>
</evidence>
<evidence type="ECO:0000255" key="3">
    <source>
        <dbReference type="PROSITE-ProRule" id="PRU10001"/>
    </source>
</evidence>
<evidence type="ECO:0000269" key="4">
    <source>
    </source>
</evidence>
<evidence type="ECO:0000303" key="5">
    <source>
    </source>
</evidence>
<evidence type="ECO:0000305" key="6"/>
<evidence type="ECO:0000305" key="7">
    <source>
    </source>
</evidence>
<feature type="chain" id="PRO_0000445817" description="Hydroxynaphthalene reductase-like protein Arp2">
    <location>
        <begin position="1"/>
        <end position="267"/>
    </location>
</feature>
<feature type="active site" description="Proton donor" evidence="2">
    <location>
        <position position="147"/>
    </location>
</feature>
<feature type="active site" description="Proton donor" evidence="2">
    <location>
        <position position="148"/>
    </location>
</feature>
<feature type="active site" description="Proton acceptor" evidence="3">
    <location>
        <position position="162"/>
    </location>
</feature>
<feature type="active site" description="Lowers pKa of active site Tyr" evidence="2">
    <location>
        <position position="166"/>
    </location>
</feature>
<feature type="binding site" evidence="1">
    <location>
        <position position="25"/>
    </location>
    <ligand>
        <name>NADP(+)</name>
        <dbReference type="ChEBI" id="CHEBI:58349"/>
    </ligand>
</feature>
<feature type="binding site" evidence="1">
    <location>
        <position position="45"/>
    </location>
    <ligand>
        <name>NADP(+)</name>
        <dbReference type="ChEBI" id="CHEBI:58349"/>
    </ligand>
</feature>
<feature type="binding site" evidence="1">
    <location>
        <position position="71"/>
    </location>
    <ligand>
        <name>NADP(+)</name>
        <dbReference type="ChEBI" id="CHEBI:58349"/>
    </ligand>
</feature>
<feature type="binding site" evidence="2">
    <location>
        <position position="98"/>
    </location>
    <ligand>
        <name>NADP(+)</name>
        <dbReference type="ChEBI" id="CHEBI:58349"/>
    </ligand>
</feature>
<feature type="binding site" evidence="2">
    <location>
        <position position="162"/>
    </location>
    <ligand>
        <name>NADP(+)</name>
        <dbReference type="ChEBI" id="CHEBI:58349"/>
    </ligand>
</feature>
<feature type="binding site" evidence="2">
    <location>
        <position position="166"/>
    </location>
    <ligand>
        <name>NADP(+)</name>
        <dbReference type="ChEBI" id="CHEBI:58349"/>
    </ligand>
</feature>
<feature type="binding site" evidence="2">
    <location>
        <position position="195"/>
    </location>
    <ligand>
        <name>NADP(+)</name>
        <dbReference type="ChEBI" id="CHEBI:58349"/>
    </ligand>
</feature>
<feature type="binding site" evidence="1">
    <location>
        <position position="197"/>
    </location>
    <ligand>
        <name>NADP(+)</name>
        <dbReference type="ChEBI" id="CHEBI:58349"/>
    </ligand>
</feature>
<protein>
    <recommendedName>
        <fullName evidence="5">Hydroxynaphthalene reductase-like protein Arp2</fullName>
        <ecNumber evidence="7">1.1.-.-</ecNumber>
    </recommendedName>
</protein>
<sequence>MASSEETPRSLTGKVALVTGAGRGIGKGIALELAKRGASVVVNYNSAEKPAQEVVDEIAKTGSRAVAIKADITKVPEVSRLFQEALRHFGHLDIVVSNSGTEVFKPEEEVTEEDYDRVFNLNTRAQFFIAQHAYVHLRNGGRIVLMSSVAANMSGIPNHALYAGSKAAVEGFTRSFAVDAGHKKITVNAIAPGGVKTDMYDANAWHYVPNGKPGMPMEEIDKGLAAFCPLGRVAVPQDIGRVVAFLAHPDSEWVNGQVILLTGGSVT</sequence>